<evidence type="ECO:0000305" key="1"/>
<organism>
    <name type="scientific">Pseudopleuronectes americanus</name>
    <name type="common">Winter flounder</name>
    <name type="synonym">Pleuronectes americanus</name>
    <dbReference type="NCBI Taxonomy" id="8265"/>
    <lineage>
        <taxon>Eukaryota</taxon>
        <taxon>Metazoa</taxon>
        <taxon>Chordata</taxon>
        <taxon>Craniata</taxon>
        <taxon>Vertebrata</taxon>
        <taxon>Euteleostomi</taxon>
        <taxon>Actinopterygii</taxon>
        <taxon>Neopterygii</taxon>
        <taxon>Teleostei</taxon>
        <taxon>Neoteleostei</taxon>
        <taxon>Acanthomorphata</taxon>
        <taxon>Carangaria</taxon>
        <taxon>Pleuronectiformes</taxon>
        <taxon>Pleuronectoidei</taxon>
        <taxon>Pleuronectidae</taxon>
        <taxon>Pseudopleuronectes</taxon>
    </lineage>
</organism>
<feature type="chain" id="PRO_0000155148" description="Ice-structuring protein 3">
    <location>
        <begin position="1"/>
        <end position="37"/>
    </location>
</feature>
<protein>
    <recommendedName>
        <fullName>Ice-structuring protein 3</fullName>
        <shortName>ISP 3</shortName>
    </recommendedName>
    <alternativeName>
        <fullName>Antifreeze peptide 3</fullName>
    </alternativeName>
</protein>
<keyword id="KW-0047">Antifreeze protein</keyword>
<keyword id="KW-0903">Direct protein sequencing</keyword>
<keyword id="KW-0677">Repeat</keyword>
<dbReference type="PIR" id="A03192">
    <property type="entry name" value="FDFL3W"/>
</dbReference>
<dbReference type="GO" id="GO:0016172">
    <property type="term" value="F:antifreeze activity"/>
    <property type="evidence" value="ECO:0007669"/>
    <property type="project" value="InterPro"/>
</dbReference>
<dbReference type="InterPro" id="IPR000104">
    <property type="entry name" value="Antifreeze_1"/>
</dbReference>
<dbReference type="PRINTS" id="PR00308">
    <property type="entry name" value="ANTIFREEZEI"/>
</dbReference>
<name>ANP3_PSEAM</name>
<reference key="1">
    <citation type="journal article" date="1977" name="Biochim. Biophys. Acta">
        <title>Structure of a peptide antifreeze and mechanism of adsorption to ice.</title>
        <authorList>
            <person name="Devries A.L."/>
            <person name="Lin Y."/>
        </authorList>
    </citation>
    <scope>PROTEIN SEQUENCE</scope>
</reference>
<sequence>DTASDAAAAAALTAABAAAAAKLTABBAAAAAAATAA</sequence>
<proteinExistence type="evidence at protein level"/>
<comment type="function">
    <text>Contributes to protect fish blood from freezing at subzero sea water temperatures. Lowers the blood freezing point. Binds to nascent ice crystals and prevents further growth.</text>
</comment>
<comment type="similarity">
    <text evidence="1">Belongs to the type-I AFP family.</text>
</comment>
<accession>P02733</accession>